<evidence type="ECO:0000255" key="1">
    <source>
        <dbReference type="HAMAP-Rule" id="MF_00009"/>
    </source>
</evidence>
<proteinExistence type="inferred from homology"/>
<comment type="function">
    <text evidence="1">Single strand-specific metallo-endoribonuclease involved in late-stage 70S ribosome quality control and in maturation of the 3' terminus of the 16S rRNA.</text>
</comment>
<comment type="cofactor">
    <cofactor evidence="1">
        <name>Zn(2+)</name>
        <dbReference type="ChEBI" id="CHEBI:29105"/>
    </cofactor>
    <text evidence="1">Binds 1 zinc ion.</text>
</comment>
<comment type="subcellular location">
    <subcellularLocation>
        <location evidence="1">Cytoplasm</location>
    </subcellularLocation>
</comment>
<comment type="similarity">
    <text evidence="1">Belongs to the endoribonuclease YbeY family.</text>
</comment>
<dbReference type="EC" id="3.1.-.-" evidence="1"/>
<dbReference type="EMBL" id="AE015451">
    <property type="protein sequence ID" value="AAN70357.1"/>
    <property type="molecule type" value="Genomic_DNA"/>
</dbReference>
<dbReference type="RefSeq" id="NP_746893.1">
    <property type="nucleotide sequence ID" value="NC_002947.4"/>
</dbReference>
<dbReference type="RefSeq" id="WP_010955408.1">
    <property type="nucleotide sequence ID" value="NZ_CP169744.1"/>
</dbReference>
<dbReference type="SMR" id="Q88DN6"/>
<dbReference type="STRING" id="160488.PP_4788"/>
<dbReference type="PaxDb" id="160488-PP_4788"/>
<dbReference type="GeneID" id="83682515"/>
<dbReference type="KEGG" id="ppu:PP_4788"/>
<dbReference type="PATRIC" id="fig|160488.4.peg.5107"/>
<dbReference type="eggNOG" id="COG0319">
    <property type="taxonomic scope" value="Bacteria"/>
</dbReference>
<dbReference type="HOGENOM" id="CLU_106710_0_1_6"/>
<dbReference type="OrthoDB" id="9807740at2"/>
<dbReference type="PhylomeDB" id="Q88DN6"/>
<dbReference type="BioCyc" id="PPUT160488:G1G01-5125-MONOMER"/>
<dbReference type="Proteomes" id="UP000000556">
    <property type="component" value="Chromosome"/>
</dbReference>
<dbReference type="GO" id="GO:0005737">
    <property type="term" value="C:cytoplasm"/>
    <property type="evidence" value="ECO:0007669"/>
    <property type="project" value="UniProtKB-SubCell"/>
</dbReference>
<dbReference type="GO" id="GO:0004222">
    <property type="term" value="F:metalloendopeptidase activity"/>
    <property type="evidence" value="ECO:0007669"/>
    <property type="project" value="InterPro"/>
</dbReference>
<dbReference type="GO" id="GO:0004521">
    <property type="term" value="F:RNA endonuclease activity"/>
    <property type="evidence" value="ECO:0007669"/>
    <property type="project" value="UniProtKB-UniRule"/>
</dbReference>
<dbReference type="GO" id="GO:0008270">
    <property type="term" value="F:zinc ion binding"/>
    <property type="evidence" value="ECO:0007669"/>
    <property type="project" value="UniProtKB-UniRule"/>
</dbReference>
<dbReference type="GO" id="GO:0006364">
    <property type="term" value="P:rRNA processing"/>
    <property type="evidence" value="ECO:0007669"/>
    <property type="project" value="UniProtKB-UniRule"/>
</dbReference>
<dbReference type="Gene3D" id="3.40.390.30">
    <property type="entry name" value="Metalloproteases ('zincins'), catalytic domain"/>
    <property type="match status" value="1"/>
</dbReference>
<dbReference type="HAMAP" id="MF_00009">
    <property type="entry name" value="Endoribonucl_YbeY"/>
    <property type="match status" value="1"/>
</dbReference>
<dbReference type="InterPro" id="IPR023091">
    <property type="entry name" value="MetalPrtase_cat_dom_sf_prd"/>
</dbReference>
<dbReference type="InterPro" id="IPR002036">
    <property type="entry name" value="YbeY"/>
</dbReference>
<dbReference type="InterPro" id="IPR020549">
    <property type="entry name" value="YbeY_CS"/>
</dbReference>
<dbReference type="NCBIfam" id="TIGR00043">
    <property type="entry name" value="rRNA maturation RNase YbeY"/>
    <property type="match status" value="1"/>
</dbReference>
<dbReference type="PANTHER" id="PTHR46986">
    <property type="entry name" value="ENDORIBONUCLEASE YBEY, CHLOROPLASTIC"/>
    <property type="match status" value="1"/>
</dbReference>
<dbReference type="PANTHER" id="PTHR46986:SF1">
    <property type="entry name" value="ENDORIBONUCLEASE YBEY, CHLOROPLASTIC"/>
    <property type="match status" value="1"/>
</dbReference>
<dbReference type="Pfam" id="PF02130">
    <property type="entry name" value="YbeY"/>
    <property type="match status" value="1"/>
</dbReference>
<dbReference type="SUPFAM" id="SSF55486">
    <property type="entry name" value="Metalloproteases ('zincins'), catalytic domain"/>
    <property type="match status" value="1"/>
</dbReference>
<dbReference type="PROSITE" id="PS01306">
    <property type="entry name" value="UPF0054"/>
    <property type="match status" value="1"/>
</dbReference>
<keyword id="KW-0963">Cytoplasm</keyword>
<keyword id="KW-0255">Endonuclease</keyword>
<keyword id="KW-0378">Hydrolase</keyword>
<keyword id="KW-0479">Metal-binding</keyword>
<keyword id="KW-0540">Nuclease</keyword>
<keyword id="KW-1185">Reference proteome</keyword>
<keyword id="KW-0690">Ribosome biogenesis</keyword>
<keyword id="KW-0698">rRNA processing</keyword>
<keyword id="KW-0862">Zinc</keyword>
<organism>
    <name type="scientific">Pseudomonas putida (strain ATCC 47054 / DSM 6125 / CFBP 8728 / NCIMB 11950 / KT2440)</name>
    <dbReference type="NCBI Taxonomy" id="160488"/>
    <lineage>
        <taxon>Bacteria</taxon>
        <taxon>Pseudomonadati</taxon>
        <taxon>Pseudomonadota</taxon>
        <taxon>Gammaproteobacteria</taxon>
        <taxon>Pseudomonadales</taxon>
        <taxon>Pseudomonadaceae</taxon>
        <taxon>Pseudomonas</taxon>
    </lineage>
</organism>
<sequence length="157" mass="17750">MLELDIQRATDAATPEDAALRRWCELALRQRSADSEMTIRLVDEAEGRELNHTYRHKDYATNVLSFPADVPDDLLDIPLLGDLVICVAVVEREAAEQGKSLEAHWAHLVIHGCLHLLGYDHIEDEEAEEMESLERELLAELGHPDPYADDETDTITH</sequence>
<accession>Q88DN6</accession>
<feature type="chain" id="PRO_0000102511" description="Endoribonuclease YbeY">
    <location>
        <begin position="1"/>
        <end position="157"/>
    </location>
</feature>
<feature type="binding site" evidence="1">
    <location>
        <position position="111"/>
    </location>
    <ligand>
        <name>Zn(2+)</name>
        <dbReference type="ChEBI" id="CHEBI:29105"/>
        <note>catalytic</note>
    </ligand>
</feature>
<feature type="binding site" evidence="1">
    <location>
        <position position="115"/>
    </location>
    <ligand>
        <name>Zn(2+)</name>
        <dbReference type="ChEBI" id="CHEBI:29105"/>
        <note>catalytic</note>
    </ligand>
</feature>
<feature type="binding site" evidence="1">
    <location>
        <position position="121"/>
    </location>
    <ligand>
        <name>Zn(2+)</name>
        <dbReference type="ChEBI" id="CHEBI:29105"/>
        <note>catalytic</note>
    </ligand>
</feature>
<reference key="1">
    <citation type="journal article" date="2002" name="Environ. Microbiol.">
        <title>Complete genome sequence and comparative analysis of the metabolically versatile Pseudomonas putida KT2440.</title>
        <authorList>
            <person name="Nelson K.E."/>
            <person name="Weinel C."/>
            <person name="Paulsen I.T."/>
            <person name="Dodson R.J."/>
            <person name="Hilbert H."/>
            <person name="Martins dos Santos V.A.P."/>
            <person name="Fouts D.E."/>
            <person name="Gill S.R."/>
            <person name="Pop M."/>
            <person name="Holmes M."/>
            <person name="Brinkac L.M."/>
            <person name="Beanan M.J."/>
            <person name="DeBoy R.T."/>
            <person name="Daugherty S.C."/>
            <person name="Kolonay J.F."/>
            <person name="Madupu R."/>
            <person name="Nelson W.C."/>
            <person name="White O."/>
            <person name="Peterson J.D."/>
            <person name="Khouri H.M."/>
            <person name="Hance I."/>
            <person name="Chris Lee P."/>
            <person name="Holtzapple E.K."/>
            <person name="Scanlan D."/>
            <person name="Tran K."/>
            <person name="Moazzez A."/>
            <person name="Utterback T.R."/>
            <person name="Rizzo M."/>
            <person name="Lee K."/>
            <person name="Kosack D."/>
            <person name="Moestl D."/>
            <person name="Wedler H."/>
            <person name="Lauber J."/>
            <person name="Stjepandic D."/>
            <person name="Hoheisel J."/>
            <person name="Straetz M."/>
            <person name="Heim S."/>
            <person name="Kiewitz C."/>
            <person name="Eisen J.A."/>
            <person name="Timmis K.N."/>
            <person name="Duesterhoeft A."/>
            <person name="Tuemmler B."/>
            <person name="Fraser C.M."/>
        </authorList>
    </citation>
    <scope>NUCLEOTIDE SEQUENCE [LARGE SCALE GENOMIC DNA]</scope>
    <source>
        <strain>ATCC 47054 / DSM 6125 / CFBP 8728 / NCIMB 11950 / KT2440</strain>
    </source>
</reference>
<protein>
    <recommendedName>
        <fullName evidence="1">Endoribonuclease YbeY</fullName>
        <ecNumber evidence="1">3.1.-.-</ecNumber>
    </recommendedName>
</protein>
<name>YBEY_PSEPK</name>
<gene>
    <name evidence="1" type="primary">ybeY</name>
    <name type="ordered locus">PP_4788</name>
</gene>